<feature type="chain" id="PRO_0000188285" description="ATP synthase epsilon chain, chloroplastic">
    <location>
        <begin position="1"/>
        <end position="137"/>
    </location>
</feature>
<name>ATPE_PINKO</name>
<accession>Q85X21</accession>
<evidence type="ECO:0000255" key="1">
    <source>
        <dbReference type="HAMAP-Rule" id="MF_00530"/>
    </source>
</evidence>
<geneLocation type="chloroplast"/>
<organism>
    <name type="scientific">Pinus koraiensis</name>
    <name type="common">Korean pine</name>
    <dbReference type="NCBI Taxonomy" id="88728"/>
    <lineage>
        <taxon>Eukaryota</taxon>
        <taxon>Viridiplantae</taxon>
        <taxon>Streptophyta</taxon>
        <taxon>Embryophyta</taxon>
        <taxon>Tracheophyta</taxon>
        <taxon>Spermatophyta</taxon>
        <taxon>Pinopsida</taxon>
        <taxon>Pinidae</taxon>
        <taxon>Conifers I</taxon>
        <taxon>Pinales</taxon>
        <taxon>Pinaceae</taxon>
        <taxon>Pinus</taxon>
        <taxon>Pinus subgen. Strobus</taxon>
    </lineage>
</organism>
<sequence>MTLNLRVLSPNRVIWDSEVQEIIISTNSGQMGVLPNHVSLVTAVDIGVMKIRLNGKWSTMALMGGFAKIDKDRITILVNNAERDVDIDLQKAQETFRRAKACLVQAEGKRQVIEADVALKRARTLLEAINASPSDSN</sequence>
<reference key="1">
    <citation type="submission" date="2003-02" db="EMBL/GenBank/DDBJ databases">
        <title>Complete nucleotide sequence of Pinus koraiensis.</title>
        <authorList>
            <person name="Noh E.W."/>
            <person name="Lee J.S."/>
            <person name="Choi Y.I."/>
            <person name="Han M.S."/>
            <person name="Yi Y.S."/>
            <person name="Han S.U."/>
        </authorList>
    </citation>
    <scope>NUCLEOTIDE SEQUENCE [LARGE SCALE GENOMIC DNA]</scope>
    <source>
        <strain>KangWon16</strain>
    </source>
</reference>
<keyword id="KW-0066">ATP synthesis</keyword>
<keyword id="KW-0139">CF(1)</keyword>
<keyword id="KW-0150">Chloroplast</keyword>
<keyword id="KW-0375">Hydrogen ion transport</keyword>
<keyword id="KW-0406">Ion transport</keyword>
<keyword id="KW-0472">Membrane</keyword>
<keyword id="KW-0934">Plastid</keyword>
<keyword id="KW-0793">Thylakoid</keyword>
<keyword id="KW-0813">Transport</keyword>
<gene>
    <name evidence="1" type="primary">atpE</name>
</gene>
<proteinExistence type="inferred from homology"/>
<protein>
    <recommendedName>
        <fullName evidence="1">ATP synthase epsilon chain, chloroplastic</fullName>
    </recommendedName>
    <alternativeName>
        <fullName evidence="1">ATP synthase F1 sector epsilon subunit</fullName>
    </alternativeName>
    <alternativeName>
        <fullName evidence="1">F-ATPase epsilon subunit</fullName>
    </alternativeName>
</protein>
<comment type="function">
    <text evidence="1">Produces ATP from ADP in the presence of a proton gradient across the membrane.</text>
</comment>
<comment type="subunit">
    <text evidence="1">F-type ATPases have 2 components, CF(1) - the catalytic core - and CF(0) - the membrane proton channel. CF(1) has five subunits: alpha(3), beta(3), gamma(1), delta(1), epsilon(1). CF(0) has three main subunits: a, b and c.</text>
</comment>
<comment type="subcellular location">
    <subcellularLocation>
        <location evidence="1">Plastid</location>
        <location evidence="1">Chloroplast thylakoid membrane</location>
        <topology evidence="1">Peripheral membrane protein</topology>
    </subcellularLocation>
</comment>
<comment type="similarity">
    <text evidence="1">Belongs to the ATPase epsilon chain family.</text>
</comment>
<dbReference type="EMBL" id="AY228468">
    <property type="protein sequence ID" value="AAO74045.1"/>
    <property type="molecule type" value="Genomic_DNA"/>
</dbReference>
<dbReference type="RefSeq" id="NP_817197.1">
    <property type="nucleotide sequence ID" value="NC_004677.2"/>
</dbReference>
<dbReference type="SMR" id="Q85X21"/>
<dbReference type="GeneID" id="806919"/>
<dbReference type="GO" id="GO:0009535">
    <property type="term" value="C:chloroplast thylakoid membrane"/>
    <property type="evidence" value="ECO:0007669"/>
    <property type="project" value="UniProtKB-SubCell"/>
</dbReference>
<dbReference type="GO" id="GO:0045259">
    <property type="term" value="C:proton-transporting ATP synthase complex"/>
    <property type="evidence" value="ECO:0007669"/>
    <property type="project" value="UniProtKB-KW"/>
</dbReference>
<dbReference type="GO" id="GO:0005524">
    <property type="term" value="F:ATP binding"/>
    <property type="evidence" value="ECO:0007669"/>
    <property type="project" value="UniProtKB-UniRule"/>
</dbReference>
<dbReference type="GO" id="GO:0046933">
    <property type="term" value="F:proton-transporting ATP synthase activity, rotational mechanism"/>
    <property type="evidence" value="ECO:0007669"/>
    <property type="project" value="UniProtKB-UniRule"/>
</dbReference>
<dbReference type="CDD" id="cd12152">
    <property type="entry name" value="F1-ATPase_delta"/>
    <property type="match status" value="1"/>
</dbReference>
<dbReference type="FunFam" id="2.60.15.10:FF:000002">
    <property type="entry name" value="ATP synthase epsilon chain, chloroplastic"/>
    <property type="match status" value="1"/>
</dbReference>
<dbReference type="Gene3D" id="6.10.140.480">
    <property type="match status" value="1"/>
</dbReference>
<dbReference type="Gene3D" id="2.60.15.10">
    <property type="entry name" value="F0F1 ATP synthase delta/epsilon subunit, N-terminal"/>
    <property type="match status" value="1"/>
</dbReference>
<dbReference type="HAMAP" id="MF_00530">
    <property type="entry name" value="ATP_synth_epsil_bac"/>
    <property type="match status" value="1"/>
</dbReference>
<dbReference type="InterPro" id="IPR001469">
    <property type="entry name" value="ATP_synth_F1_dsu/esu"/>
</dbReference>
<dbReference type="InterPro" id="IPR020546">
    <property type="entry name" value="ATP_synth_F1_dsu/esu_N"/>
</dbReference>
<dbReference type="InterPro" id="IPR020547">
    <property type="entry name" value="ATP_synth_F1_esu_C"/>
</dbReference>
<dbReference type="InterPro" id="IPR036771">
    <property type="entry name" value="ATPsynth_dsu/esu_N"/>
</dbReference>
<dbReference type="NCBIfam" id="TIGR01216">
    <property type="entry name" value="ATP_synt_epsi"/>
    <property type="match status" value="1"/>
</dbReference>
<dbReference type="PANTHER" id="PTHR13822">
    <property type="entry name" value="ATP SYNTHASE DELTA/EPSILON CHAIN"/>
    <property type="match status" value="1"/>
</dbReference>
<dbReference type="PANTHER" id="PTHR13822:SF10">
    <property type="entry name" value="ATP SYNTHASE EPSILON CHAIN, CHLOROPLASTIC"/>
    <property type="match status" value="1"/>
</dbReference>
<dbReference type="Pfam" id="PF00401">
    <property type="entry name" value="ATP-synt_DE"/>
    <property type="match status" value="1"/>
</dbReference>
<dbReference type="Pfam" id="PF02823">
    <property type="entry name" value="ATP-synt_DE_N"/>
    <property type="match status" value="1"/>
</dbReference>
<dbReference type="SUPFAM" id="SSF51344">
    <property type="entry name" value="Epsilon subunit of F1F0-ATP synthase N-terminal domain"/>
    <property type="match status" value="1"/>
</dbReference>